<sequence length="142" mass="16017">MKLTAEDKHNVKAIWDHVKGHEEAIGAEALYRMFCCMPTTRIYFPAKDLSERSSYLHSHGKKVVGALTNAVAHIDDIDTAFSKLSDKHAEELMVDPANFPKLAHNILVVLGIHLKPHFTYSVHRSVDKFLSTVAYVLASKYR</sequence>
<accession>P06639</accession>
<comment type="function">
    <text>Involved in oxygen transport from the lung to the various peripheral tissues.</text>
</comment>
<comment type="subunit">
    <text>Major hemoglobin is a heterotetramer of two alpha-1 chains and two beta-1 chains.</text>
</comment>
<comment type="tissue specificity">
    <text>Red blood cells.</text>
</comment>
<comment type="similarity">
    <text evidence="1">Belongs to the globin family.</text>
</comment>
<feature type="initiator methionine" description="Removed">
    <location>
        <position position="1"/>
    </location>
</feature>
<feature type="chain" id="PRO_0000052733" description="Hemoglobin subunit alpha-1">
    <location>
        <begin position="2"/>
        <end position="142"/>
    </location>
</feature>
<feature type="domain" description="Globin" evidence="1">
    <location>
        <begin position="2"/>
        <end position="142"/>
    </location>
</feature>
<feature type="binding site" evidence="1">
    <location>
        <position position="59"/>
    </location>
    <ligand>
        <name>O2</name>
        <dbReference type="ChEBI" id="CHEBI:15379"/>
    </ligand>
</feature>
<feature type="binding site" description="proximal binding residue" evidence="1">
    <location>
        <position position="88"/>
    </location>
    <ligand>
        <name>heme b</name>
        <dbReference type="ChEBI" id="CHEBI:60344"/>
    </ligand>
    <ligandPart>
        <name>Fe</name>
        <dbReference type="ChEBI" id="CHEBI:18248"/>
    </ligandPart>
</feature>
<organism>
    <name type="scientific">Pleurodeles waltl</name>
    <name type="common">Iberian ribbed newt</name>
    <dbReference type="NCBI Taxonomy" id="8319"/>
    <lineage>
        <taxon>Eukaryota</taxon>
        <taxon>Metazoa</taxon>
        <taxon>Chordata</taxon>
        <taxon>Craniata</taxon>
        <taxon>Vertebrata</taxon>
        <taxon>Euteleostomi</taxon>
        <taxon>Amphibia</taxon>
        <taxon>Batrachia</taxon>
        <taxon>Caudata</taxon>
        <taxon>Salamandroidea</taxon>
        <taxon>Salamandridae</taxon>
        <taxon>Pleurodelinae</taxon>
        <taxon>Pleurodeles</taxon>
    </lineage>
</organism>
<evidence type="ECO:0000255" key="1">
    <source>
        <dbReference type="PROSITE-ProRule" id="PRU00238"/>
    </source>
</evidence>
<proteinExistence type="evidence at transcript level"/>
<dbReference type="EMBL" id="M13365">
    <property type="protein sequence ID" value="AAA49612.1"/>
    <property type="molecule type" value="mRNA"/>
</dbReference>
<dbReference type="PIR" id="A25640">
    <property type="entry name" value="HANER"/>
</dbReference>
<dbReference type="RefSeq" id="XP_069066496.1">
    <property type="nucleotide sequence ID" value="XM_069210395.1"/>
</dbReference>
<dbReference type="SMR" id="P06639"/>
<dbReference type="GeneID" id="138261446"/>
<dbReference type="OrthoDB" id="8751793at2759"/>
<dbReference type="GO" id="GO:0072562">
    <property type="term" value="C:blood microparticle"/>
    <property type="evidence" value="ECO:0007669"/>
    <property type="project" value="TreeGrafter"/>
</dbReference>
<dbReference type="GO" id="GO:0031838">
    <property type="term" value="C:haptoglobin-hemoglobin complex"/>
    <property type="evidence" value="ECO:0007669"/>
    <property type="project" value="TreeGrafter"/>
</dbReference>
<dbReference type="GO" id="GO:0005833">
    <property type="term" value="C:hemoglobin complex"/>
    <property type="evidence" value="ECO:0007669"/>
    <property type="project" value="InterPro"/>
</dbReference>
<dbReference type="GO" id="GO:0031720">
    <property type="term" value="F:haptoglobin binding"/>
    <property type="evidence" value="ECO:0007669"/>
    <property type="project" value="TreeGrafter"/>
</dbReference>
<dbReference type="GO" id="GO:0020037">
    <property type="term" value="F:heme binding"/>
    <property type="evidence" value="ECO:0007669"/>
    <property type="project" value="InterPro"/>
</dbReference>
<dbReference type="GO" id="GO:0046872">
    <property type="term" value="F:metal ion binding"/>
    <property type="evidence" value="ECO:0007669"/>
    <property type="project" value="UniProtKB-KW"/>
</dbReference>
<dbReference type="GO" id="GO:0043177">
    <property type="term" value="F:organic acid binding"/>
    <property type="evidence" value="ECO:0007669"/>
    <property type="project" value="TreeGrafter"/>
</dbReference>
<dbReference type="GO" id="GO:0019825">
    <property type="term" value="F:oxygen binding"/>
    <property type="evidence" value="ECO:0007669"/>
    <property type="project" value="InterPro"/>
</dbReference>
<dbReference type="GO" id="GO:0005344">
    <property type="term" value="F:oxygen carrier activity"/>
    <property type="evidence" value="ECO:0007669"/>
    <property type="project" value="UniProtKB-KW"/>
</dbReference>
<dbReference type="GO" id="GO:0004601">
    <property type="term" value="F:peroxidase activity"/>
    <property type="evidence" value="ECO:0007669"/>
    <property type="project" value="TreeGrafter"/>
</dbReference>
<dbReference type="GO" id="GO:0042744">
    <property type="term" value="P:hydrogen peroxide catabolic process"/>
    <property type="evidence" value="ECO:0007669"/>
    <property type="project" value="TreeGrafter"/>
</dbReference>
<dbReference type="CDD" id="cd08927">
    <property type="entry name" value="Hb-alpha-like"/>
    <property type="match status" value="1"/>
</dbReference>
<dbReference type="FunFam" id="1.10.490.10:FF:000002">
    <property type="entry name" value="Hemoglobin subunit alpha"/>
    <property type="match status" value="1"/>
</dbReference>
<dbReference type="Gene3D" id="1.10.490.10">
    <property type="entry name" value="Globins"/>
    <property type="match status" value="1"/>
</dbReference>
<dbReference type="InterPro" id="IPR000971">
    <property type="entry name" value="Globin"/>
</dbReference>
<dbReference type="InterPro" id="IPR009050">
    <property type="entry name" value="Globin-like_sf"/>
</dbReference>
<dbReference type="InterPro" id="IPR012292">
    <property type="entry name" value="Globin/Proto"/>
</dbReference>
<dbReference type="InterPro" id="IPR002338">
    <property type="entry name" value="Hemoglobin_a-typ"/>
</dbReference>
<dbReference type="InterPro" id="IPR050056">
    <property type="entry name" value="Hemoglobin_oxygen_transport"/>
</dbReference>
<dbReference type="PANTHER" id="PTHR11442">
    <property type="entry name" value="HEMOGLOBIN FAMILY MEMBER"/>
    <property type="match status" value="1"/>
</dbReference>
<dbReference type="PANTHER" id="PTHR11442:SF48">
    <property type="entry name" value="HEMOGLOBIN SUBUNIT ALPHA"/>
    <property type="match status" value="1"/>
</dbReference>
<dbReference type="Pfam" id="PF00042">
    <property type="entry name" value="Globin"/>
    <property type="match status" value="1"/>
</dbReference>
<dbReference type="PRINTS" id="PR00612">
    <property type="entry name" value="ALPHAHAEM"/>
</dbReference>
<dbReference type="SUPFAM" id="SSF46458">
    <property type="entry name" value="Globin-like"/>
    <property type="match status" value="1"/>
</dbReference>
<dbReference type="PROSITE" id="PS01033">
    <property type="entry name" value="GLOBIN"/>
    <property type="match status" value="1"/>
</dbReference>
<protein>
    <recommendedName>
        <fullName>Hemoglobin subunit alpha-1</fullName>
    </recommendedName>
    <alternativeName>
        <fullName>Alpha-1-globin</fullName>
    </alternativeName>
    <alternativeName>
        <fullName>Hemoglobin alpha-1 chain</fullName>
    </alternativeName>
    <alternativeName>
        <fullName>Hemoglobin alpha-major chain</fullName>
    </alternativeName>
</protein>
<keyword id="KW-0349">Heme</keyword>
<keyword id="KW-0408">Iron</keyword>
<keyword id="KW-0479">Metal-binding</keyword>
<keyword id="KW-0561">Oxygen transport</keyword>
<keyword id="KW-0813">Transport</keyword>
<reference key="1">
    <citation type="journal article" date="1986" name="Gene">
        <title>Cloning and sequencing of mRNAs coding for two adult alpha globin chains of the salamander Pleurodeles waltlii.</title>
        <authorList>
            <person name="Flavin M."/>
            <person name="Romeo P.-H."/>
            <person name="Cohen-Solal M."/>
            <person name="Duprat A.-M."/>
            <person name="Valentin C."/>
            <person name="Rosa J."/>
        </authorList>
    </citation>
    <scope>NUCLEOTIDE SEQUENCE [MRNA]</scope>
</reference>
<name>HBA1_PLEWA</name>